<proteinExistence type="inferred from homology"/>
<accession>B4U246</accession>
<protein>
    <recommendedName>
        <fullName evidence="1">3-phosphoshikimate 1-carboxyvinyltransferase</fullName>
        <ecNumber evidence="1">2.5.1.19</ecNumber>
    </recommendedName>
    <alternativeName>
        <fullName evidence="1">5-enolpyruvylshikimate-3-phosphate synthase</fullName>
        <shortName evidence="1">EPSP synthase</shortName>
        <shortName evidence="1">EPSPS</shortName>
    </alternativeName>
</protein>
<feature type="chain" id="PRO_1000099755" description="3-phosphoshikimate 1-carboxyvinyltransferase">
    <location>
        <begin position="1"/>
        <end position="427"/>
    </location>
</feature>
<feature type="active site" description="Proton acceptor" evidence="1">
    <location>
        <position position="312"/>
    </location>
</feature>
<feature type="binding site" evidence="1">
    <location>
        <position position="20"/>
    </location>
    <ligand>
        <name>3-phosphoshikimate</name>
        <dbReference type="ChEBI" id="CHEBI:145989"/>
    </ligand>
</feature>
<feature type="binding site" evidence="1">
    <location>
        <position position="20"/>
    </location>
    <ligand>
        <name>phosphoenolpyruvate</name>
        <dbReference type="ChEBI" id="CHEBI:58702"/>
    </ligand>
</feature>
<feature type="binding site" evidence="1">
    <location>
        <position position="21"/>
    </location>
    <ligand>
        <name>3-phosphoshikimate</name>
        <dbReference type="ChEBI" id="CHEBI:145989"/>
    </ligand>
</feature>
<feature type="binding site" evidence="1">
    <location>
        <position position="25"/>
    </location>
    <ligand>
        <name>3-phosphoshikimate</name>
        <dbReference type="ChEBI" id="CHEBI:145989"/>
    </ligand>
</feature>
<feature type="binding site" evidence="1">
    <location>
        <position position="92"/>
    </location>
    <ligand>
        <name>phosphoenolpyruvate</name>
        <dbReference type="ChEBI" id="CHEBI:58702"/>
    </ligand>
</feature>
<feature type="binding site" evidence="1">
    <location>
        <position position="120"/>
    </location>
    <ligand>
        <name>phosphoenolpyruvate</name>
        <dbReference type="ChEBI" id="CHEBI:58702"/>
    </ligand>
</feature>
<feature type="binding site" evidence="1">
    <location>
        <position position="166"/>
    </location>
    <ligand>
        <name>3-phosphoshikimate</name>
        <dbReference type="ChEBI" id="CHEBI:145989"/>
    </ligand>
</feature>
<feature type="binding site" evidence="1">
    <location>
        <position position="168"/>
    </location>
    <ligand>
        <name>3-phosphoshikimate</name>
        <dbReference type="ChEBI" id="CHEBI:145989"/>
    </ligand>
</feature>
<feature type="binding site" evidence="1">
    <location>
        <position position="168"/>
    </location>
    <ligand>
        <name>phosphoenolpyruvate</name>
        <dbReference type="ChEBI" id="CHEBI:58702"/>
    </ligand>
</feature>
<feature type="binding site" evidence="1">
    <location>
        <position position="312"/>
    </location>
    <ligand>
        <name>3-phosphoshikimate</name>
        <dbReference type="ChEBI" id="CHEBI:145989"/>
    </ligand>
</feature>
<feature type="binding site" evidence="1">
    <location>
        <position position="339"/>
    </location>
    <ligand>
        <name>3-phosphoshikimate</name>
        <dbReference type="ChEBI" id="CHEBI:145989"/>
    </ligand>
</feature>
<feature type="binding site" evidence="1">
    <location>
        <position position="343"/>
    </location>
    <ligand>
        <name>phosphoenolpyruvate</name>
        <dbReference type="ChEBI" id="CHEBI:58702"/>
    </ligand>
</feature>
<feature type="binding site" evidence="1">
    <location>
        <position position="385"/>
    </location>
    <ligand>
        <name>phosphoenolpyruvate</name>
        <dbReference type="ChEBI" id="CHEBI:58702"/>
    </ligand>
</feature>
<evidence type="ECO:0000255" key="1">
    <source>
        <dbReference type="HAMAP-Rule" id="MF_00210"/>
    </source>
</evidence>
<comment type="function">
    <text evidence="1">Catalyzes the transfer of the enolpyruvyl moiety of phosphoenolpyruvate (PEP) to the 5-hydroxyl of shikimate-3-phosphate (S3P) to produce enolpyruvyl shikimate-3-phosphate and inorganic phosphate.</text>
</comment>
<comment type="catalytic activity">
    <reaction evidence="1">
        <text>3-phosphoshikimate + phosphoenolpyruvate = 5-O-(1-carboxyvinyl)-3-phosphoshikimate + phosphate</text>
        <dbReference type="Rhea" id="RHEA:21256"/>
        <dbReference type="ChEBI" id="CHEBI:43474"/>
        <dbReference type="ChEBI" id="CHEBI:57701"/>
        <dbReference type="ChEBI" id="CHEBI:58702"/>
        <dbReference type="ChEBI" id="CHEBI:145989"/>
        <dbReference type="EC" id="2.5.1.19"/>
    </reaction>
    <physiologicalReaction direction="left-to-right" evidence="1">
        <dbReference type="Rhea" id="RHEA:21257"/>
    </physiologicalReaction>
</comment>
<comment type="pathway">
    <text evidence="1">Metabolic intermediate biosynthesis; chorismate biosynthesis; chorismate from D-erythrose 4-phosphate and phosphoenolpyruvate: step 6/7.</text>
</comment>
<comment type="subunit">
    <text evidence="1">Monomer.</text>
</comment>
<comment type="subcellular location">
    <subcellularLocation>
        <location evidence="1">Cytoplasm</location>
    </subcellularLocation>
</comment>
<comment type="similarity">
    <text evidence="1">Belongs to the EPSP synthase family.</text>
</comment>
<reference key="1">
    <citation type="journal article" date="2008" name="PLoS ONE">
        <title>Genome sequence of a lancefield group C Streptococcus zooepidemicus strain causing epidemic nephritis: new information about an old disease.</title>
        <authorList>
            <person name="Beres S.B."/>
            <person name="Sesso R."/>
            <person name="Pinto S.W.L."/>
            <person name="Hoe N.P."/>
            <person name="Porcella S.F."/>
            <person name="Deleo F.R."/>
            <person name="Musser J.M."/>
        </authorList>
    </citation>
    <scope>NUCLEOTIDE SEQUENCE [LARGE SCALE GENOMIC DNA]</scope>
    <source>
        <strain>MGCS10565</strain>
    </source>
</reference>
<sequence>MKLRTKAKALRGRLRVPGDKSISHRAVIFGAIAEGQTVIHGLLRGQDVLATIQAFRDLGVTIYESADSLIIEGRGFKGLKPAQKPLDMGNSGTSMRLLAGLLAAQDFSVQLFGDDSLSRRPMDRITIPLSLMGAELSGQGEKELPPLIVKGCQGLRPIHYQLPVASAQVKSAILLAALQTQGETVILEKELTRNHTEEMIEQFGGKLSVAGKQISIKGPQRLQGQTLQIPGDLSSAAFWLAAGLIVPGSDLVLENVGINPTRTGLLEVIEKMGGQLSYQAVDKDIQTATLKVSYSTLKGIEISGDLIPRLIDELPVIALLATQAQGTTYIRDAQELRVKETDRIQAVTDVLGQMGADIQATEDGMVIRGKTPLHGAAVSTCGDHRIGMMTAIAALLVEEGQVTLERAEAILTSYPDFFKDLERLWHD</sequence>
<dbReference type="EC" id="2.5.1.19" evidence="1"/>
<dbReference type="EMBL" id="CP001129">
    <property type="protein sequence ID" value="ACG62063.1"/>
    <property type="molecule type" value="Genomic_DNA"/>
</dbReference>
<dbReference type="RefSeq" id="WP_012515339.1">
    <property type="nucleotide sequence ID" value="NC_011134.1"/>
</dbReference>
<dbReference type="SMR" id="B4U246"/>
<dbReference type="KEGG" id="sez:Sez_0700"/>
<dbReference type="HOGENOM" id="CLU_024321_0_1_9"/>
<dbReference type="UniPathway" id="UPA00053">
    <property type="reaction ID" value="UER00089"/>
</dbReference>
<dbReference type="Proteomes" id="UP000001873">
    <property type="component" value="Chromosome"/>
</dbReference>
<dbReference type="GO" id="GO:0005737">
    <property type="term" value="C:cytoplasm"/>
    <property type="evidence" value="ECO:0007669"/>
    <property type="project" value="UniProtKB-SubCell"/>
</dbReference>
<dbReference type="GO" id="GO:0003866">
    <property type="term" value="F:3-phosphoshikimate 1-carboxyvinyltransferase activity"/>
    <property type="evidence" value="ECO:0007669"/>
    <property type="project" value="UniProtKB-UniRule"/>
</dbReference>
<dbReference type="GO" id="GO:0008652">
    <property type="term" value="P:amino acid biosynthetic process"/>
    <property type="evidence" value="ECO:0007669"/>
    <property type="project" value="UniProtKB-KW"/>
</dbReference>
<dbReference type="GO" id="GO:0009073">
    <property type="term" value="P:aromatic amino acid family biosynthetic process"/>
    <property type="evidence" value="ECO:0007669"/>
    <property type="project" value="UniProtKB-KW"/>
</dbReference>
<dbReference type="GO" id="GO:0009423">
    <property type="term" value="P:chorismate biosynthetic process"/>
    <property type="evidence" value="ECO:0007669"/>
    <property type="project" value="UniProtKB-UniRule"/>
</dbReference>
<dbReference type="CDD" id="cd01556">
    <property type="entry name" value="EPSP_synthase"/>
    <property type="match status" value="1"/>
</dbReference>
<dbReference type="FunFam" id="3.65.10.10:FF:000005">
    <property type="entry name" value="3-phosphoshikimate 1-carboxyvinyltransferase"/>
    <property type="match status" value="1"/>
</dbReference>
<dbReference type="FunFam" id="3.65.10.10:FF:000006">
    <property type="entry name" value="3-phosphoshikimate 1-carboxyvinyltransferase"/>
    <property type="match status" value="1"/>
</dbReference>
<dbReference type="Gene3D" id="3.65.10.10">
    <property type="entry name" value="Enolpyruvate transferase domain"/>
    <property type="match status" value="2"/>
</dbReference>
<dbReference type="HAMAP" id="MF_00210">
    <property type="entry name" value="EPSP_synth"/>
    <property type="match status" value="1"/>
</dbReference>
<dbReference type="InterPro" id="IPR001986">
    <property type="entry name" value="Enolpyruvate_Tfrase_dom"/>
</dbReference>
<dbReference type="InterPro" id="IPR036968">
    <property type="entry name" value="Enolpyruvate_Tfrase_sf"/>
</dbReference>
<dbReference type="InterPro" id="IPR006264">
    <property type="entry name" value="EPSP_synthase"/>
</dbReference>
<dbReference type="InterPro" id="IPR023193">
    <property type="entry name" value="EPSP_synthase_CS"/>
</dbReference>
<dbReference type="InterPro" id="IPR013792">
    <property type="entry name" value="RNA3'P_cycl/enolpyr_Trfase_a/b"/>
</dbReference>
<dbReference type="NCBIfam" id="TIGR01356">
    <property type="entry name" value="aroA"/>
    <property type="match status" value="1"/>
</dbReference>
<dbReference type="PANTHER" id="PTHR21090">
    <property type="entry name" value="AROM/DEHYDROQUINATE SYNTHASE"/>
    <property type="match status" value="1"/>
</dbReference>
<dbReference type="PANTHER" id="PTHR21090:SF5">
    <property type="entry name" value="PENTAFUNCTIONAL AROM POLYPEPTIDE"/>
    <property type="match status" value="1"/>
</dbReference>
<dbReference type="Pfam" id="PF00275">
    <property type="entry name" value="EPSP_synthase"/>
    <property type="match status" value="1"/>
</dbReference>
<dbReference type="PIRSF" id="PIRSF000505">
    <property type="entry name" value="EPSPS"/>
    <property type="match status" value="1"/>
</dbReference>
<dbReference type="SUPFAM" id="SSF55205">
    <property type="entry name" value="EPT/RTPC-like"/>
    <property type="match status" value="1"/>
</dbReference>
<dbReference type="PROSITE" id="PS00104">
    <property type="entry name" value="EPSP_SYNTHASE_1"/>
    <property type="match status" value="1"/>
</dbReference>
<dbReference type="PROSITE" id="PS00885">
    <property type="entry name" value="EPSP_SYNTHASE_2"/>
    <property type="match status" value="1"/>
</dbReference>
<gene>
    <name evidence="1" type="primary">aroA</name>
    <name type="ordered locus">Sez_0700</name>
</gene>
<organism>
    <name type="scientific">Streptococcus equi subsp. zooepidemicus (strain MGCS10565)</name>
    <dbReference type="NCBI Taxonomy" id="552526"/>
    <lineage>
        <taxon>Bacteria</taxon>
        <taxon>Bacillati</taxon>
        <taxon>Bacillota</taxon>
        <taxon>Bacilli</taxon>
        <taxon>Lactobacillales</taxon>
        <taxon>Streptococcaceae</taxon>
        <taxon>Streptococcus</taxon>
    </lineage>
</organism>
<keyword id="KW-0028">Amino-acid biosynthesis</keyword>
<keyword id="KW-0057">Aromatic amino acid biosynthesis</keyword>
<keyword id="KW-0963">Cytoplasm</keyword>
<keyword id="KW-0808">Transferase</keyword>
<name>AROA_STREM</name>